<dbReference type="EC" id="4.1.1.65" evidence="1"/>
<dbReference type="EMBL" id="AE017321">
    <property type="protein sequence ID" value="AAW71014.1"/>
    <property type="status" value="ALT_INIT"/>
    <property type="molecule type" value="Genomic_DNA"/>
</dbReference>
<dbReference type="RefSeq" id="WP_041571460.1">
    <property type="nucleotide sequence ID" value="NC_006833.1"/>
</dbReference>
<dbReference type="SMR" id="Q5GSL0"/>
<dbReference type="STRING" id="292805.Wbm0426"/>
<dbReference type="KEGG" id="wbm:Wbm0426"/>
<dbReference type="eggNOG" id="COG0688">
    <property type="taxonomic scope" value="Bacteria"/>
</dbReference>
<dbReference type="HOGENOM" id="CLU_072492_0_0_5"/>
<dbReference type="UniPathway" id="UPA00558">
    <property type="reaction ID" value="UER00616"/>
</dbReference>
<dbReference type="Proteomes" id="UP000000534">
    <property type="component" value="Chromosome"/>
</dbReference>
<dbReference type="GO" id="GO:0005886">
    <property type="term" value="C:plasma membrane"/>
    <property type="evidence" value="ECO:0007669"/>
    <property type="project" value="UniProtKB-SubCell"/>
</dbReference>
<dbReference type="GO" id="GO:0004609">
    <property type="term" value="F:phosphatidylserine decarboxylase activity"/>
    <property type="evidence" value="ECO:0007669"/>
    <property type="project" value="UniProtKB-UniRule"/>
</dbReference>
<dbReference type="GO" id="GO:0006646">
    <property type="term" value="P:phosphatidylethanolamine biosynthetic process"/>
    <property type="evidence" value="ECO:0007669"/>
    <property type="project" value="UniProtKB-UniRule"/>
</dbReference>
<dbReference type="HAMAP" id="MF_00664">
    <property type="entry name" value="PS_decarb_PSD_A"/>
    <property type="match status" value="1"/>
</dbReference>
<dbReference type="InterPro" id="IPR003817">
    <property type="entry name" value="PS_Dcarbxylase"/>
</dbReference>
<dbReference type="InterPro" id="IPR033175">
    <property type="entry name" value="PSD-A"/>
</dbReference>
<dbReference type="NCBIfam" id="NF003678">
    <property type="entry name" value="PRK05305.1-2"/>
    <property type="match status" value="1"/>
</dbReference>
<dbReference type="NCBIfam" id="NF003684">
    <property type="entry name" value="PRK05305.2-4"/>
    <property type="match status" value="1"/>
</dbReference>
<dbReference type="NCBIfam" id="NF003685">
    <property type="entry name" value="PRK05305.2-5"/>
    <property type="match status" value="1"/>
</dbReference>
<dbReference type="PANTHER" id="PTHR35809">
    <property type="entry name" value="ARCHAETIDYLSERINE DECARBOXYLASE PROENZYME-RELATED"/>
    <property type="match status" value="1"/>
</dbReference>
<dbReference type="PANTHER" id="PTHR35809:SF1">
    <property type="entry name" value="ARCHAETIDYLSERINE DECARBOXYLASE PROENZYME-RELATED"/>
    <property type="match status" value="1"/>
</dbReference>
<dbReference type="Pfam" id="PF02666">
    <property type="entry name" value="PS_Dcarbxylase"/>
    <property type="match status" value="1"/>
</dbReference>
<organism>
    <name type="scientific">Wolbachia sp. subsp. Brugia malayi (strain TRS)</name>
    <dbReference type="NCBI Taxonomy" id="292805"/>
    <lineage>
        <taxon>Bacteria</taxon>
        <taxon>Pseudomonadati</taxon>
        <taxon>Pseudomonadota</taxon>
        <taxon>Alphaproteobacteria</taxon>
        <taxon>Rickettsiales</taxon>
        <taxon>Anaplasmataceae</taxon>
        <taxon>Wolbachieae</taxon>
        <taxon>Wolbachia</taxon>
    </lineage>
</organism>
<feature type="chain" id="PRO_0000262281" description="Phosphatidylserine decarboxylase beta chain" evidence="1">
    <location>
        <begin position="1"/>
        <end position="185"/>
    </location>
</feature>
<feature type="chain" id="PRO_0000262282" description="Phosphatidylserine decarboxylase alpha chain" evidence="1">
    <location>
        <begin position="186"/>
        <end position="230"/>
    </location>
</feature>
<feature type="active site" description="Schiff-base intermediate with substrate; via pyruvic acid" evidence="1">
    <location>
        <position position="186"/>
    </location>
</feature>
<feature type="site" description="Cleavage (non-hydrolytic); by autocatalysis" evidence="1">
    <location>
        <begin position="185"/>
        <end position="186"/>
    </location>
</feature>
<feature type="modified residue" description="Pyruvic acid (Ser); by autocatalysis" evidence="1">
    <location>
        <position position="186"/>
    </location>
</feature>
<accession>Q5GSL0</accession>
<protein>
    <recommendedName>
        <fullName evidence="1">Phosphatidylserine decarboxylase proenzyme</fullName>
        <ecNumber evidence="1">4.1.1.65</ecNumber>
    </recommendedName>
    <component>
        <recommendedName>
            <fullName evidence="1">Phosphatidylserine decarboxylase alpha chain</fullName>
        </recommendedName>
    </component>
    <component>
        <recommendedName>
            <fullName evidence="1">Phosphatidylserine decarboxylase beta chain</fullName>
        </recommendedName>
    </component>
</protein>
<name>PSD_WOLTR</name>
<proteinExistence type="inferred from homology"/>
<reference key="1">
    <citation type="journal article" date="2005" name="PLoS Biol.">
        <title>The Wolbachia genome of Brugia malayi: endosymbiont evolution within a human pathogenic nematode.</title>
        <authorList>
            <person name="Foster J."/>
            <person name="Ganatra M."/>
            <person name="Kamal I."/>
            <person name="Ware J."/>
            <person name="Makarova K."/>
            <person name="Ivanova N."/>
            <person name="Bhattacharyya A."/>
            <person name="Kapatral V."/>
            <person name="Kumar S."/>
            <person name="Posfai J."/>
            <person name="Vincze T."/>
            <person name="Ingram J."/>
            <person name="Moran L."/>
            <person name="Lapidus A."/>
            <person name="Omelchenko M."/>
            <person name="Kyrpides N."/>
            <person name="Ghedin E."/>
            <person name="Wang S."/>
            <person name="Goltsman E."/>
            <person name="Joukov V."/>
            <person name="Ostrovskaya O."/>
            <person name="Tsukerman K."/>
            <person name="Mazur M."/>
            <person name="Comb D."/>
            <person name="Koonin E."/>
            <person name="Slatko B."/>
        </authorList>
    </citation>
    <scope>NUCLEOTIDE SEQUENCE [LARGE SCALE GENOMIC DNA]</scope>
    <source>
        <strain>TRS</strain>
    </source>
</reference>
<comment type="function">
    <text evidence="1">Catalyzes the formation of phosphatidylethanolamine (PtdEtn) from phosphatidylserine (PtdSer).</text>
</comment>
<comment type="catalytic activity">
    <reaction evidence="1">
        <text>a 1,2-diacyl-sn-glycero-3-phospho-L-serine + H(+) = a 1,2-diacyl-sn-glycero-3-phosphoethanolamine + CO2</text>
        <dbReference type="Rhea" id="RHEA:20828"/>
        <dbReference type="ChEBI" id="CHEBI:15378"/>
        <dbReference type="ChEBI" id="CHEBI:16526"/>
        <dbReference type="ChEBI" id="CHEBI:57262"/>
        <dbReference type="ChEBI" id="CHEBI:64612"/>
        <dbReference type="EC" id="4.1.1.65"/>
    </reaction>
</comment>
<comment type="cofactor">
    <cofactor evidence="1">
        <name>pyruvate</name>
        <dbReference type="ChEBI" id="CHEBI:15361"/>
    </cofactor>
    <text evidence="1">Binds 1 pyruvoyl group covalently per subunit.</text>
</comment>
<comment type="pathway">
    <text evidence="1">Phospholipid metabolism; phosphatidylethanolamine biosynthesis; phosphatidylethanolamine from CDP-diacylglycerol: step 2/2.</text>
</comment>
<comment type="subunit">
    <text evidence="1">Heterodimer of a large membrane-associated beta subunit and a small pyruvoyl-containing alpha subunit.</text>
</comment>
<comment type="subcellular location">
    <subcellularLocation>
        <location evidence="1">Cell membrane</location>
        <topology evidence="1">Peripheral membrane protein</topology>
    </subcellularLocation>
</comment>
<comment type="PTM">
    <text evidence="1">Is synthesized initially as an inactive proenzyme. Formation of the active enzyme involves a self-maturation process in which the active site pyruvoyl group is generated from an internal serine residue via an autocatalytic post-translational modification. Two non-identical subunits are generated from the proenzyme in this reaction, and the pyruvate is formed at the N-terminus of the alpha chain, which is derived from the carboxyl end of the proenzyme. The post-translation cleavage follows an unusual pathway, termed non-hydrolytic serinolysis, in which the side chain hydroxyl group of the serine supplies its oxygen atom to form the C-terminus of the beta chain, while the remainder of the serine residue undergoes an oxidative deamination to produce ammonia and the pyruvoyl prosthetic group on the alpha chain.</text>
</comment>
<comment type="similarity">
    <text evidence="1">Belongs to the phosphatidylserine decarboxylase family. PSD-A subfamily.</text>
</comment>
<comment type="sequence caution" evidence="2">
    <conflict type="erroneous initiation">
        <sequence resource="EMBL-CDS" id="AAW71014"/>
    </conflict>
</comment>
<evidence type="ECO:0000255" key="1">
    <source>
        <dbReference type="HAMAP-Rule" id="MF_00664"/>
    </source>
</evidence>
<evidence type="ECO:0000305" key="2"/>
<gene>
    <name evidence="1" type="primary">psd</name>
    <name type="ordered locus">Wbm0426</name>
</gene>
<sequence>MCFSLPSINKEGYLFIVVSFIVTCIAFSISWGFGVTCLFPTLLCTYFFRDPARIIPGNKDLVLSPADGVISKIEEVSYPLSTNNGEEKKFTLVSIFLSVLNVHVNRIPISGTVKEMHYKKGKFVSAMSDRSSNENEKQVIVIEYTKGKEIIVEQIAGLIARRIVCNLRVSQSVKAGERFGIIRFGSRVNIYVPTDVEIRVSEGQTVVGGETIIANLNKENTQEKLTFDLV</sequence>
<keyword id="KW-1003">Cell membrane</keyword>
<keyword id="KW-0210">Decarboxylase</keyword>
<keyword id="KW-0444">Lipid biosynthesis</keyword>
<keyword id="KW-0443">Lipid metabolism</keyword>
<keyword id="KW-0456">Lyase</keyword>
<keyword id="KW-0472">Membrane</keyword>
<keyword id="KW-0594">Phospholipid biosynthesis</keyword>
<keyword id="KW-1208">Phospholipid metabolism</keyword>
<keyword id="KW-0670">Pyruvate</keyword>
<keyword id="KW-1185">Reference proteome</keyword>
<keyword id="KW-0865">Zymogen</keyword>